<evidence type="ECO:0000255" key="1">
    <source>
        <dbReference type="HAMAP-Rule" id="MF_00514"/>
    </source>
</evidence>
<evidence type="ECO:0000256" key="2">
    <source>
        <dbReference type="SAM" id="MobiDB-lite"/>
    </source>
</evidence>
<evidence type="ECO:0000305" key="3"/>
<keyword id="KW-0687">Ribonucleoprotein</keyword>
<keyword id="KW-0689">Ribosomal protein</keyword>
<gene>
    <name evidence="1" type="primary">rpmI</name>
    <name type="ordered locus">SPCG_0936</name>
</gene>
<name>RL35_STRPS</name>
<organism>
    <name type="scientific">Streptococcus pneumoniae (strain CGSP14)</name>
    <dbReference type="NCBI Taxonomy" id="516950"/>
    <lineage>
        <taxon>Bacteria</taxon>
        <taxon>Bacillati</taxon>
        <taxon>Bacillota</taxon>
        <taxon>Bacilli</taxon>
        <taxon>Lactobacillales</taxon>
        <taxon>Streptococcaceae</taxon>
        <taxon>Streptococcus</taxon>
    </lineage>
</organism>
<comment type="similarity">
    <text evidence="1">Belongs to the bacterial ribosomal protein bL35 family.</text>
</comment>
<dbReference type="EMBL" id="CP001033">
    <property type="protein sequence ID" value="ACB90188.1"/>
    <property type="molecule type" value="Genomic_DNA"/>
</dbReference>
<dbReference type="RefSeq" id="WP_001125943.1">
    <property type="nucleotide sequence ID" value="NC_010582.1"/>
</dbReference>
<dbReference type="SMR" id="B2IPB4"/>
<dbReference type="GeneID" id="93739777"/>
<dbReference type="KEGG" id="spw:SPCG_0936"/>
<dbReference type="HOGENOM" id="CLU_169643_3_0_9"/>
<dbReference type="GO" id="GO:0022625">
    <property type="term" value="C:cytosolic large ribosomal subunit"/>
    <property type="evidence" value="ECO:0007669"/>
    <property type="project" value="TreeGrafter"/>
</dbReference>
<dbReference type="GO" id="GO:0003735">
    <property type="term" value="F:structural constituent of ribosome"/>
    <property type="evidence" value="ECO:0007669"/>
    <property type="project" value="InterPro"/>
</dbReference>
<dbReference type="GO" id="GO:0006412">
    <property type="term" value="P:translation"/>
    <property type="evidence" value="ECO:0007669"/>
    <property type="project" value="UniProtKB-UniRule"/>
</dbReference>
<dbReference type="FunFam" id="4.10.410.60:FF:000001">
    <property type="entry name" value="50S ribosomal protein L35"/>
    <property type="match status" value="1"/>
</dbReference>
<dbReference type="Gene3D" id="4.10.410.60">
    <property type="match status" value="1"/>
</dbReference>
<dbReference type="HAMAP" id="MF_00514">
    <property type="entry name" value="Ribosomal_bL35"/>
    <property type="match status" value="1"/>
</dbReference>
<dbReference type="InterPro" id="IPR001706">
    <property type="entry name" value="Ribosomal_bL35"/>
</dbReference>
<dbReference type="InterPro" id="IPR021137">
    <property type="entry name" value="Ribosomal_bL35-like"/>
</dbReference>
<dbReference type="InterPro" id="IPR018265">
    <property type="entry name" value="Ribosomal_bL35_CS"/>
</dbReference>
<dbReference type="InterPro" id="IPR037229">
    <property type="entry name" value="Ribosomal_bL35_sf"/>
</dbReference>
<dbReference type="NCBIfam" id="TIGR00001">
    <property type="entry name" value="rpmI_bact"/>
    <property type="match status" value="1"/>
</dbReference>
<dbReference type="PANTHER" id="PTHR33343">
    <property type="entry name" value="54S RIBOSOMAL PROTEIN BL35M"/>
    <property type="match status" value="1"/>
</dbReference>
<dbReference type="PANTHER" id="PTHR33343:SF1">
    <property type="entry name" value="LARGE RIBOSOMAL SUBUNIT PROTEIN BL35M"/>
    <property type="match status" value="1"/>
</dbReference>
<dbReference type="Pfam" id="PF01632">
    <property type="entry name" value="Ribosomal_L35p"/>
    <property type="match status" value="1"/>
</dbReference>
<dbReference type="PRINTS" id="PR00064">
    <property type="entry name" value="RIBOSOMALL35"/>
</dbReference>
<dbReference type="SUPFAM" id="SSF143034">
    <property type="entry name" value="L35p-like"/>
    <property type="match status" value="1"/>
</dbReference>
<dbReference type="PROSITE" id="PS00936">
    <property type="entry name" value="RIBOSOMAL_L35"/>
    <property type="match status" value="1"/>
</dbReference>
<sequence>MPKQKTHRASAKRFKRTGSGGLKRFRAYTSHRFHGKTKKQRRHLRKASMVHSGDYKRIKAMLTRLK</sequence>
<proteinExistence type="inferred from homology"/>
<reference key="1">
    <citation type="journal article" date="2009" name="BMC Genomics">
        <title>Genome evolution driven by host adaptations results in a more virulent and antimicrobial-resistant Streptococcus pneumoniae serotype 14.</title>
        <authorList>
            <person name="Ding F."/>
            <person name="Tang P."/>
            <person name="Hsu M.-H."/>
            <person name="Cui P."/>
            <person name="Hu S."/>
            <person name="Yu J."/>
            <person name="Chiu C.-H."/>
        </authorList>
    </citation>
    <scope>NUCLEOTIDE SEQUENCE [LARGE SCALE GENOMIC DNA]</scope>
    <source>
        <strain>CGSP14</strain>
    </source>
</reference>
<feature type="chain" id="PRO_1000127415" description="Large ribosomal subunit protein bL35">
    <location>
        <begin position="1"/>
        <end position="66"/>
    </location>
</feature>
<feature type="region of interest" description="Disordered" evidence="2">
    <location>
        <begin position="1"/>
        <end position="21"/>
    </location>
</feature>
<feature type="compositionally biased region" description="Basic residues" evidence="2">
    <location>
        <begin position="1"/>
        <end position="16"/>
    </location>
</feature>
<accession>B2IPB4</accession>
<protein>
    <recommendedName>
        <fullName evidence="1">Large ribosomal subunit protein bL35</fullName>
    </recommendedName>
    <alternativeName>
        <fullName evidence="3">50S ribosomal protein L35</fullName>
    </alternativeName>
</protein>